<name>EFUE_HORCR</name>
<comment type="function">
    <text evidence="2 5">Dehydrogenase; part of the gene cluster that mediates the biosynthesis of enfumafungin, a glycosylated fernene-type triterpenoid with potent antifungal activity, mediated by its interaction with beta-1,3-glucan synthase and the fungal cell wall (PubMed:30051576). The pathway begins with the terpene cyclase-glycosyl transferase fusion protein that most likely uses 2,3-oxidosqualene as substrate and catalyzes glycosylation immediately after cyclization (Probable). The fernene glycoside then could be processed by the desaturase efuI which catalyzes isomerization of a double bond established by efuA to form the core structure (Probable). The latter would then undergo a series of hydroxylations in unknown order at C-2, C-19, C-23 and C-25, which would be catalyzed by two of the three cytochrome P450 monooxygenases efuB, efuG or efuH (Probable). The hydroxy-group at C-25 becomes oxidized by the dehydrogenase efuE to enable a spontaneous, non-enzymatic hemiacetal formation with C-23 (Probable). After hydroxylation at C-2, acetylation by the acetyltransferase efuC takes place (Probable). The final steps in enfumafungin biosynthesis require expansion of the 5-membered ring by lactonization via a Baeyer-Villiger reaction mediated by one of the BGC's cytochrome P450 monooxygenases (efuB, efuG or efuH) followed by ring cleavage (Probable). This type of reaction would establish a double bond between C-20 and C-21 which could be reduced by the reductase efuL to form the final product (Probable).</text>
</comment>
<comment type="pathway">
    <text evidence="5">Secondary metabolite biosynthesis; terpenoid biosynthesis.</text>
</comment>
<comment type="similarity">
    <text evidence="4">Belongs to the D-isomer specific 2-hydroxyacid dehydrogenase family.</text>
</comment>
<organism>
    <name type="scientific">Hormonema carpetanum</name>
    <dbReference type="NCBI Taxonomy" id="284138"/>
    <lineage>
        <taxon>Eukaryota</taxon>
        <taxon>Fungi</taxon>
        <taxon>Dikarya</taxon>
        <taxon>Ascomycota</taxon>
        <taxon>Pezizomycotina</taxon>
        <taxon>Dothideomycetes</taxon>
        <taxon>Dothideomycetidae</taxon>
        <taxon>Dothideales</taxon>
        <taxon>Dothioraceae</taxon>
        <taxon>Hormonema</taxon>
    </lineage>
</organism>
<protein>
    <recommendedName>
        <fullName evidence="3">Dehydrogenase efuE</fullName>
        <ecNumber evidence="5">1.-.-.-</ecNumber>
    </recommendedName>
    <alternativeName>
        <fullName evidence="3">Enfumafungin biosynthesis cluster protein E</fullName>
    </alternativeName>
</protein>
<accession>A0A2Z4HPZ6</accession>
<dbReference type="EC" id="1.-.-.-" evidence="5"/>
<dbReference type="EMBL" id="MF611886">
    <property type="protein sequence ID" value="AWW17214.1"/>
    <property type="molecule type" value="Genomic_DNA"/>
</dbReference>
<dbReference type="SMR" id="A0A2Z4HPZ6"/>
<dbReference type="UniPathway" id="UPA00213"/>
<dbReference type="GO" id="GO:0005829">
    <property type="term" value="C:cytosol"/>
    <property type="evidence" value="ECO:0007669"/>
    <property type="project" value="TreeGrafter"/>
</dbReference>
<dbReference type="GO" id="GO:0030267">
    <property type="term" value="F:glyoxylate reductase (NADPH) activity"/>
    <property type="evidence" value="ECO:0007669"/>
    <property type="project" value="TreeGrafter"/>
</dbReference>
<dbReference type="GO" id="GO:0016618">
    <property type="term" value="F:hydroxypyruvate reductase [NAD(P)H] activity"/>
    <property type="evidence" value="ECO:0007669"/>
    <property type="project" value="TreeGrafter"/>
</dbReference>
<dbReference type="GO" id="GO:0051287">
    <property type="term" value="F:NAD binding"/>
    <property type="evidence" value="ECO:0007669"/>
    <property type="project" value="InterPro"/>
</dbReference>
<dbReference type="GO" id="GO:0016114">
    <property type="term" value="P:terpenoid biosynthetic process"/>
    <property type="evidence" value="ECO:0007669"/>
    <property type="project" value="UniProtKB-UniPathway"/>
</dbReference>
<dbReference type="CDD" id="cd12168">
    <property type="entry name" value="Mand_dh_like"/>
    <property type="match status" value="1"/>
</dbReference>
<dbReference type="FunFam" id="3.40.50.720:FF:000203">
    <property type="entry name" value="D-3-phosphoglycerate dehydrogenase (SerA)"/>
    <property type="match status" value="1"/>
</dbReference>
<dbReference type="Gene3D" id="3.40.50.720">
    <property type="entry name" value="NAD(P)-binding Rossmann-like Domain"/>
    <property type="match status" value="2"/>
</dbReference>
<dbReference type="InterPro" id="IPR050223">
    <property type="entry name" value="D-isomer_2-hydroxyacid_DH"/>
</dbReference>
<dbReference type="InterPro" id="IPR006139">
    <property type="entry name" value="D-isomer_2_OHA_DH_cat_dom"/>
</dbReference>
<dbReference type="InterPro" id="IPR029753">
    <property type="entry name" value="D-isomer_DH_CS"/>
</dbReference>
<dbReference type="InterPro" id="IPR029752">
    <property type="entry name" value="D-isomer_DH_CS1"/>
</dbReference>
<dbReference type="InterPro" id="IPR006140">
    <property type="entry name" value="D-isomer_DH_NAD-bd"/>
</dbReference>
<dbReference type="InterPro" id="IPR036291">
    <property type="entry name" value="NAD(P)-bd_dom_sf"/>
</dbReference>
<dbReference type="PANTHER" id="PTHR10996">
    <property type="entry name" value="2-HYDROXYACID DEHYDROGENASE-RELATED"/>
    <property type="match status" value="1"/>
</dbReference>
<dbReference type="PANTHER" id="PTHR10996:SF269">
    <property type="entry name" value="HYPOTHETICAL D-ISOMER SPECIFIC 2-HYDROXYACID DEHYDROGENASE (EUROFUNG)"/>
    <property type="match status" value="1"/>
</dbReference>
<dbReference type="Pfam" id="PF00389">
    <property type="entry name" value="2-Hacid_dh"/>
    <property type="match status" value="1"/>
</dbReference>
<dbReference type="Pfam" id="PF02826">
    <property type="entry name" value="2-Hacid_dh_C"/>
    <property type="match status" value="1"/>
</dbReference>
<dbReference type="SUPFAM" id="SSF52283">
    <property type="entry name" value="Formate/glycerate dehydrogenase catalytic domain-like"/>
    <property type="match status" value="1"/>
</dbReference>
<dbReference type="SUPFAM" id="SSF51735">
    <property type="entry name" value="NAD(P)-binding Rossmann-fold domains"/>
    <property type="match status" value="1"/>
</dbReference>
<dbReference type="PROSITE" id="PS00065">
    <property type="entry name" value="D_2_HYDROXYACID_DH_1"/>
    <property type="match status" value="1"/>
</dbReference>
<dbReference type="PROSITE" id="PS00671">
    <property type="entry name" value="D_2_HYDROXYACID_DH_3"/>
    <property type="match status" value="1"/>
</dbReference>
<proteinExistence type="inferred from homology"/>
<keyword id="KW-0520">NAD</keyword>
<keyword id="KW-0560">Oxidoreductase</keyword>
<sequence length="400" mass="43876">MVESSRWYSVPETLSAKAGLPIVSLPFNNQIQTSPFSVRSSYYLPLQTVNMSPSLVAPRQKALSLRHPTMAGKEYLEEFSKKYIIDVLDVPNREEWLKQLPKKVAKDGPYSALIIGMGTGPYEPFDAEFCQALLPDLKLVVSASAGYNEFDVSWMTENNIWFCNTVDAVSEATADMAIFLTLAALRDTTNAERSARAGNWKAGFVPCRDPTGLRLGIIGMGAIGKHIARKAAVFNLEIVYHNRKRLQEADETTYKATYCPTLASLLETSDIVSISVPLNDETTGMISESEIALMKDSSILINTARGAVVDEAALIEALESGKIWRAGLDVFCNEPDINPYFKTSDKVVVQPHLGGLTAVAFRKAYRECFENVASFFDTGKPLAPVNDVTRAKGTPTASLP</sequence>
<gene>
    <name evidence="3" type="primary">efuE</name>
</gene>
<evidence type="ECO:0000250" key="1">
    <source>
        <dbReference type="UniProtKB" id="Q9I3W9"/>
    </source>
</evidence>
<evidence type="ECO:0000269" key="2">
    <source>
    </source>
</evidence>
<evidence type="ECO:0000303" key="3">
    <source>
    </source>
</evidence>
<evidence type="ECO:0000305" key="4"/>
<evidence type="ECO:0000305" key="5">
    <source>
    </source>
</evidence>
<reference key="1">
    <citation type="journal article" date="2018" name="Environ. Microbiol.">
        <title>Enfumafungin synthase represents a novel lineage of fungal triterpene cyclases.</title>
        <authorList>
            <person name="Kuhnert E."/>
            <person name="Li Y."/>
            <person name="Lan N."/>
            <person name="Yue Q."/>
            <person name="Chen L."/>
            <person name="Cox R.J."/>
            <person name="An Z."/>
            <person name="Yokoyama K."/>
            <person name="Bills G.F."/>
        </authorList>
    </citation>
    <scope>NUCLEOTIDE SEQUENCE [GENOMIC DNA]</scope>
    <scope>FUNCTION</scope>
    <scope>PATHWAY</scope>
</reference>
<feature type="chain" id="PRO_0000454462" description="Dehydrogenase efuE">
    <location>
        <begin position="1"/>
        <end position="400"/>
    </location>
</feature>
<feature type="active site" evidence="1">
    <location>
        <position position="305"/>
    </location>
</feature>
<feature type="active site" evidence="1">
    <location>
        <position position="334"/>
    </location>
</feature>
<feature type="active site" description="Proton donor" evidence="1">
    <location>
        <position position="352"/>
    </location>
</feature>
<feature type="binding site" evidence="1">
    <location>
        <begin position="222"/>
        <end position="223"/>
    </location>
    <ligand>
        <name>NAD(+)</name>
        <dbReference type="ChEBI" id="CHEBI:57540"/>
    </ligand>
</feature>
<feature type="binding site" evidence="1">
    <location>
        <begin position="303"/>
        <end position="305"/>
    </location>
    <ligand>
        <name>NAD(+)</name>
        <dbReference type="ChEBI" id="CHEBI:57540"/>
    </ligand>
</feature>
<feature type="binding site" evidence="1">
    <location>
        <position position="329"/>
    </location>
    <ligand>
        <name>NAD(+)</name>
        <dbReference type="ChEBI" id="CHEBI:57540"/>
    </ligand>
</feature>
<feature type="binding site" evidence="1">
    <location>
        <begin position="352"/>
        <end position="355"/>
    </location>
    <ligand>
        <name>NAD(+)</name>
        <dbReference type="ChEBI" id="CHEBI:57540"/>
    </ligand>
</feature>